<evidence type="ECO:0000255" key="1">
    <source>
        <dbReference type="PROSITE-ProRule" id="PRU00405"/>
    </source>
</evidence>
<evidence type="ECO:0000269" key="2">
    <source>
    </source>
</evidence>
<evidence type="ECO:0000269" key="3">
    <source>
    </source>
</evidence>
<evidence type="ECO:0000269" key="4">
    <source>
    </source>
</evidence>
<evidence type="ECO:0000269" key="5">
    <source>
    </source>
</evidence>
<evidence type="ECO:0000303" key="6">
    <source>
    </source>
</evidence>
<evidence type="ECO:0000305" key="7"/>
<evidence type="ECO:0000305" key="8">
    <source>
    </source>
</evidence>
<evidence type="ECO:0000305" key="9">
    <source>
    </source>
</evidence>
<evidence type="ECO:0000312" key="10">
    <source>
        <dbReference type="EMBL" id="CAA78293.1"/>
    </source>
</evidence>
<evidence type="ECO:0000312" key="11">
    <source>
        <dbReference type="EMBL" id="CXYK01000012"/>
    </source>
</evidence>
<accession>Q47526</accession>
<organism>
    <name type="scientific">Escherichia coli</name>
    <dbReference type="NCBI Taxonomy" id="562"/>
    <lineage>
        <taxon>Bacteria</taxon>
        <taxon>Pseudomonadati</taxon>
        <taxon>Pseudomonadota</taxon>
        <taxon>Gammaproteobacteria</taxon>
        <taxon>Enterobacterales</taxon>
        <taxon>Enterobacteriaceae</taxon>
        <taxon>Escherichia</taxon>
    </lineage>
</organism>
<keyword id="KW-0051">Antiviral defense</keyword>
<keyword id="KW-0460">Magnesium</keyword>
<keyword id="KW-0479">Metal-binding</keyword>
<keyword id="KW-0548">Nucleotidyltransferase</keyword>
<keyword id="KW-0694">RNA-binding</keyword>
<keyword id="KW-0695">RNA-directed DNA polymerase</keyword>
<keyword id="KW-0808">Transferase</keyword>
<gene>
    <name evidence="6" type="primary">ret</name>
    <name type="ORF">Ga0124318_11281</name>
</gene>
<name>RT83_ECOLX</name>
<proteinExistence type="evidence at protein level"/>
<reference evidence="10" key="1">
    <citation type="journal article" date="1992" name="Mol. Microbiol.">
        <title>Structure and biosynthesis of unbranched multicopy single-stranded DNA by reverse transcriptase in a clinical Escherichia coli isolate.</title>
        <authorList>
            <person name="Lim D."/>
        </authorList>
    </citation>
    <scope>NUCLEOTIDE SEQUENCE [GENOMIC DNA]</scope>
    <scope>FUNCTION</scope>
    <source>
        <strain>Clinical strain 161</strain>
    </source>
</reference>
<reference evidence="11" key="2">
    <citation type="submission" date="2015-08" db="EMBL/GenBank/DDBJ databases">
        <authorList>
            <person name="Hur Y.J."/>
        </authorList>
    </citation>
    <scope>NUCLEOTIDE SEQUENCE [LARGE SCALE GENOMIC DNA]</scope>
    <source>
        <strain>05-2753</strain>
    </source>
</reference>
<reference key="3">
    <citation type="journal article" date="1994" name="Mol. Microbiol.">
        <title>Multicopy single-stranded DNAs with mismatched base pairs are mutagenic in Escherichia coli.</title>
        <authorList>
            <person name="Maas W.K."/>
            <person name="Wang C."/>
            <person name="Lima T."/>
            <person name="Zubay G."/>
            <person name="Lim D."/>
        </authorList>
    </citation>
    <scope>FUNCTION</scope>
    <source>
        <strain>Clinical strain 161</strain>
    </source>
</reference>
<reference key="4">
    <citation type="journal article" date="2015" name="J. Microbiol.">
        <title>Characterization of cell death in Escherichia coli mediated by XseA, a large subunit of exonuclease VII.</title>
        <authorList>
            <person name="Jung H."/>
            <person name="Liang J."/>
            <person name="Jung Y."/>
            <person name="Lim D."/>
        </authorList>
    </citation>
    <scope>MATURATION BY EXOVII</scope>
</reference>
<reference key="5">
    <citation type="journal article" date="2020" name="Cell">
        <title>Bacterial Retrons Function In Anti-Phage Defense.</title>
        <authorList>
            <person name="Millman A."/>
            <person name="Bernheim A."/>
            <person name="Stokar-Avihail A."/>
            <person name="Fedorenko T."/>
            <person name="Voichek M."/>
            <person name="Leavitt A."/>
            <person name="Oppenheimer-Shaanan Y."/>
            <person name="Sorek R."/>
        </authorList>
    </citation>
    <scope>FUNCTION IN ANTIVIRAL DEFENSE</scope>
    <scope>IDENTIFICATION AS A RETRON</scope>
    <source>
        <strain>05-2753</strain>
    </source>
</reference>
<sequence>MSIDIETTLQKAYPDFDVLLKSRPATHYKVYKIPKRTIGYRIIAQPTPRVKAIQRDIIEILKQHTHIHDAATAYVDGKNILDNAKIHQSSVYLLKLDLVNFFNKITPELLFKALARQKVDISDTNKNLLKQFCFWNRTKRKNGALVLSVGAPSSPFISNIVMSSFDEEISSFCKENKISYSRYADDLTFSTNERDVLGLAHQKVKTTLIRFFGTRIIINNNKIVYSSKAHNRHVTGVTLTNNNKLSLGRERKRYITSLVFKFKEGKLSNVDINHLRGLIGFAYNIEPAFIERLEKKYGESTIKSIKKYSEGG</sequence>
<protein>
    <recommendedName>
        <fullName evidence="6">Retron Ec83 reverse transcriptase</fullName>
        <shortName evidence="6">RT</shortName>
        <ecNumber evidence="1 8">2.7.7.49</ecNumber>
    </recommendedName>
</protein>
<feature type="chain" id="PRO_0000456020" description="Retron Ec83 reverse transcriptase">
    <location>
        <begin position="1"/>
        <end position="312"/>
    </location>
</feature>
<feature type="domain" description="Reverse transcriptase" evidence="1">
    <location>
        <begin position="14"/>
        <end position="239"/>
    </location>
</feature>
<feature type="binding site" evidence="1">
    <location>
        <position position="97"/>
    </location>
    <ligand>
        <name>Mg(2+)</name>
        <dbReference type="ChEBI" id="CHEBI:18420"/>
        <note>catalytic</note>
    </ligand>
</feature>
<feature type="binding site" evidence="1">
    <location>
        <position position="185"/>
    </location>
    <ligand>
        <name>Mg(2+)</name>
        <dbReference type="ChEBI" id="CHEBI:18420"/>
        <note>catalytic</note>
    </ligand>
</feature>
<feature type="binding site" evidence="1">
    <location>
        <position position="186"/>
    </location>
    <ligand>
        <name>Mg(2+)</name>
        <dbReference type="ChEBI" id="CHEBI:18420"/>
        <note>catalytic</note>
    </ligand>
</feature>
<dbReference type="EC" id="2.7.7.49" evidence="1 8"/>
<dbReference type="EMBL" id="Z12832">
    <property type="protein sequence ID" value="CAA78293.1"/>
    <property type="molecule type" value="Genomic_DNA"/>
</dbReference>
<dbReference type="EMBL" id="CXYK01000012">
    <property type="status" value="NOT_ANNOTATED_CDS"/>
    <property type="molecule type" value="Genomic_DNA"/>
</dbReference>
<dbReference type="PIR" id="S28006">
    <property type="entry name" value="S28006"/>
</dbReference>
<dbReference type="RefSeq" id="WP_001403504.1">
    <property type="nucleotide sequence ID" value="NZ_WEPV01000028.1"/>
</dbReference>
<dbReference type="SMR" id="Q47526"/>
<dbReference type="GO" id="GO:0046872">
    <property type="term" value="F:metal ion binding"/>
    <property type="evidence" value="ECO:0007669"/>
    <property type="project" value="UniProtKB-KW"/>
</dbReference>
<dbReference type="GO" id="GO:0003723">
    <property type="term" value="F:RNA binding"/>
    <property type="evidence" value="ECO:0007669"/>
    <property type="project" value="UniProtKB-KW"/>
</dbReference>
<dbReference type="GO" id="GO:0003964">
    <property type="term" value="F:RNA-directed DNA polymerase activity"/>
    <property type="evidence" value="ECO:0007669"/>
    <property type="project" value="UniProtKB-KW"/>
</dbReference>
<dbReference type="GO" id="GO:0051607">
    <property type="term" value="P:defense response to virus"/>
    <property type="evidence" value="ECO:0007669"/>
    <property type="project" value="UniProtKB-KW"/>
</dbReference>
<dbReference type="CDD" id="cd03487">
    <property type="entry name" value="RT_Bac_retron_II"/>
    <property type="match status" value="1"/>
</dbReference>
<dbReference type="InterPro" id="IPR043502">
    <property type="entry name" value="DNA/RNA_pol_sf"/>
</dbReference>
<dbReference type="InterPro" id="IPR051083">
    <property type="entry name" value="GrpII_Intron_Splice-Mob/Def"/>
</dbReference>
<dbReference type="InterPro" id="IPR000123">
    <property type="entry name" value="Reverse_transcriptase_msDNA"/>
</dbReference>
<dbReference type="InterPro" id="IPR000477">
    <property type="entry name" value="RT_dom"/>
</dbReference>
<dbReference type="NCBIfam" id="NF038233">
    <property type="entry name" value="retron_St85_RT"/>
    <property type="match status" value="1"/>
</dbReference>
<dbReference type="PANTHER" id="PTHR34047">
    <property type="entry name" value="NUCLEAR INTRON MATURASE 1, MITOCHONDRIAL-RELATED"/>
    <property type="match status" value="1"/>
</dbReference>
<dbReference type="PANTHER" id="PTHR34047:SF7">
    <property type="entry name" value="RNA-DIRECTED DNA POLYMERASE"/>
    <property type="match status" value="1"/>
</dbReference>
<dbReference type="Pfam" id="PF00078">
    <property type="entry name" value="RVT_1"/>
    <property type="match status" value="1"/>
</dbReference>
<dbReference type="PRINTS" id="PR00866">
    <property type="entry name" value="RNADNAPOLMS"/>
</dbReference>
<dbReference type="SUPFAM" id="SSF56672">
    <property type="entry name" value="DNA/RNA polymerases"/>
    <property type="match status" value="1"/>
</dbReference>
<dbReference type="PROSITE" id="PS50878">
    <property type="entry name" value="RT_POL"/>
    <property type="match status" value="1"/>
</dbReference>
<comment type="function">
    <text evidence="2 3 4 5 9">Reverse transcriptase (RT) component of antiviral defense system retron Ec83, composed of a non-coding RNA (ncRNA), this reverse transcriptase (RT), a probable ATPase and a putative HNH endonuclease. Expression of retron Ec83 confers protection against bacteriophages T2, T4 and T6. At multiplicity of infection (MOI) of 0.02 cultures slow growth when infected with T4 but do not collapse, at MOI 2 cultures enter growth stasis (PubMed:33157039). Responsible for synthesis of msDNA-Ec83 (a linear ssDNA with a 5'-terminal phosphate residue). Unlike most known msDNAs the mature product from the original strain does not have an RNA component. When the ncRNA plus RT are expressed in strain K12 / JM109 only linear DNA is seen in stationary phase cells, but logarithmic phase cells have both a linear and branched msDNA (a branched molecule with RNA linked by a 2',5'-phosphodiester bond to ssDNA, a 'classic' retron). The branched msDNA is probably the precursor for the mature linear msDNA, the precursor is cleaved endonucleolytically by ExoVII (xseA-xseB) leaving the observed mature 5'-phosphate ssDNA terminus. The retron transcript serves as primer (from a conserved internal G residue) and template for the reaction, and codes for the RT (PubMed:1282191, PubMed:26626352). Overexpression of the ncRNA and RT, which leads to increased levels of msDNA, is mutagenic in vivo (PubMed:7885227). This may be due to a mismatch in the msDNA stem which binds and sequesters MutS and/or MutL (Probable).</text>
</comment>
<comment type="catalytic activity">
    <reaction evidence="1 8">
        <text>DNA(n) + a 2'-deoxyribonucleoside 5'-triphosphate = DNA(n+1) + diphosphate</text>
        <dbReference type="Rhea" id="RHEA:22508"/>
        <dbReference type="Rhea" id="RHEA-COMP:17339"/>
        <dbReference type="Rhea" id="RHEA-COMP:17340"/>
        <dbReference type="ChEBI" id="CHEBI:33019"/>
        <dbReference type="ChEBI" id="CHEBI:61560"/>
        <dbReference type="ChEBI" id="CHEBI:173112"/>
        <dbReference type="EC" id="2.7.7.49"/>
    </reaction>
</comment>
<comment type="similarity">
    <text evidence="7">Belongs to the bacterial reverse transcriptase family.</text>
</comment>